<organism>
    <name type="scientific">Solanum tuberosum</name>
    <name type="common">Potato</name>
    <dbReference type="NCBI Taxonomy" id="4113"/>
    <lineage>
        <taxon>Eukaryota</taxon>
        <taxon>Viridiplantae</taxon>
        <taxon>Streptophyta</taxon>
        <taxon>Embryophyta</taxon>
        <taxon>Tracheophyta</taxon>
        <taxon>Spermatophyta</taxon>
        <taxon>Magnoliopsida</taxon>
        <taxon>eudicotyledons</taxon>
        <taxon>Gunneridae</taxon>
        <taxon>Pentapetalae</taxon>
        <taxon>asterids</taxon>
        <taxon>lamiids</taxon>
        <taxon>Solanales</taxon>
        <taxon>Solanaceae</taxon>
        <taxon>Solanoideae</taxon>
        <taxon>Solaneae</taxon>
        <taxon>Solanum</taxon>
    </lineage>
</organism>
<protein>
    <recommendedName>
        <fullName>Antifungal protein J</fullName>
        <shortName>AFP-J</shortName>
    </recommendedName>
</protein>
<sequence length="20" mass="2155">LPSDATLVLDQTGKELDARL</sequence>
<proteinExistence type="evidence at protein level"/>
<feature type="chain" id="PRO_0000232424" description="Antifungal protein J" evidence="2">
    <location>
        <begin position="1"/>
        <end position="20" status="greater than"/>
    </location>
</feature>
<feature type="non-terminal residue" evidence="3">
    <location>
        <position position="20"/>
    </location>
</feature>
<name>AFPJ_SOLTU</name>
<dbReference type="STRING" id="4113.P84794"/>
<dbReference type="InParanoid" id="P84794"/>
<dbReference type="Proteomes" id="UP000011115">
    <property type="component" value="Unassembled WGS sequence"/>
</dbReference>
<dbReference type="GO" id="GO:0005773">
    <property type="term" value="C:vacuole"/>
    <property type="evidence" value="ECO:0000250"/>
    <property type="project" value="UniProtKB"/>
</dbReference>
<dbReference type="GO" id="GO:0004867">
    <property type="term" value="F:serine-type endopeptidase inhibitor activity"/>
    <property type="evidence" value="ECO:0000314"/>
    <property type="project" value="UniProtKB"/>
</dbReference>
<dbReference type="GO" id="GO:0050832">
    <property type="term" value="P:defense response to fungus"/>
    <property type="evidence" value="ECO:0000314"/>
    <property type="project" value="UniProtKB"/>
</dbReference>
<dbReference type="GO" id="GO:0031640">
    <property type="term" value="P:killing of cells of another organism"/>
    <property type="evidence" value="ECO:0007669"/>
    <property type="project" value="UniProtKB-KW"/>
</dbReference>
<evidence type="ECO:0000250" key="1">
    <source>
        <dbReference type="UniProtKB" id="P30941"/>
    </source>
</evidence>
<evidence type="ECO:0000269" key="2">
    <source>
    </source>
</evidence>
<evidence type="ECO:0000303" key="3">
    <source>
    </source>
</evidence>
<evidence type="ECO:0000305" key="4"/>
<accession>P84794</accession>
<reference evidence="4" key="1">
    <citation type="journal article" date="2005" name="J. Agric. Food Chem.">
        <title>Kunitz-type serine protease inhibitor from potato (Solanum tuberosum L. cv. Jopung).</title>
        <authorList>
            <person name="Park Y."/>
            <person name="Choi B.H."/>
            <person name="Kwak J.-S."/>
            <person name="Kang C.-W."/>
            <person name="Lim H.-T."/>
            <person name="Cheong H.-S."/>
            <person name="Hahm K.-S."/>
        </authorList>
    </citation>
    <scope>PROTEIN SEQUENCE</scope>
    <scope>FUNCTION</scope>
    <scope>MASS SPECTROMETRY</scope>
    <source>
        <strain evidence="2">cv. Jopung</strain>
        <tissue evidence="2">Tuber</tissue>
    </source>
</reference>
<keyword id="KW-0929">Antimicrobial</keyword>
<keyword id="KW-0903">Direct protein sequencing</keyword>
<keyword id="KW-0295">Fungicide</keyword>
<keyword id="KW-0646">Protease inhibitor</keyword>
<keyword id="KW-1185">Reference proteome</keyword>
<keyword id="KW-0722">Serine protease inhibitor</keyword>
<keyword id="KW-0926">Vacuole</keyword>
<comment type="function">
    <text evidence="2">Inhibitor of serine proteases chymotrypsin, pepsin and trypsin. Has strong antifungal activity against the human pathogenic fungi C.albicans TIMM 1768, S.cerevisiae KCTC 7296 and T.beigelli KCTC 7707, but lacks antifungal activity against the plant pathogenic fungi C.gloeosporioides KACC 40003, C.coccodes KACC 40803 and D.bryoniae KACC 40669. Lacks hemolytic activity against human erythrocytes.</text>
</comment>
<comment type="subcellular location">
    <subcellularLocation>
        <location evidence="1">Vacuole</location>
    </subcellularLocation>
</comment>
<comment type="mass spectrometry" mass="13500.5" method="MALDI" evidence="2"/>
<comment type="similarity">
    <text evidence="4">Belongs to the protease inhibitor I3 (leguminous Kunitz-type inhibitor) family.</text>
</comment>